<keyword id="KW-0963">Cytoplasm</keyword>
<keyword id="KW-0690">Ribosome biogenesis</keyword>
<comment type="function">
    <text evidence="1">One of several proteins that assist in the late maturation steps of the functional core of the 30S ribosomal subunit. Associates with free 30S ribosomal subunits (but not with 30S subunits that are part of 70S ribosomes or polysomes). Required for efficient processing of 16S rRNA. May interact with the 5'-terminal helix region of 16S rRNA.</text>
</comment>
<comment type="subunit">
    <text evidence="1">Monomer. Binds 30S ribosomal subunits, but not 50S ribosomal subunits or 70S ribosomes.</text>
</comment>
<comment type="subcellular location">
    <subcellularLocation>
        <location evidence="1">Cytoplasm</location>
    </subcellularLocation>
</comment>
<comment type="similarity">
    <text evidence="1">Belongs to the RbfA family.</text>
</comment>
<gene>
    <name evidence="1" type="primary">rbfA</name>
    <name type="ordered locus">RER_26340</name>
</gene>
<protein>
    <recommendedName>
        <fullName evidence="1">Ribosome-binding factor A</fullName>
    </recommendedName>
</protein>
<sequence>MVDPARARKLAKRIGTIVATAIDHEIKDPRLAFVTITDTKVTNDLHDATVYYTVMGEKVDSAPDVEAAAAGLEKAKGVLRSKVGAGTGVRFTPTLTFVADTVPDTARHMEELLARAKAADDEVAKARENAQPAGDADPYKEPRVASDEDEASPDVREAD</sequence>
<evidence type="ECO:0000255" key="1">
    <source>
        <dbReference type="HAMAP-Rule" id="MF_00003"/>
    </source>
</evidence>
<evidence type="ECO:0000256" key="2">
    <source>
        <dbReference type="SAM" id="MobiDB-lite"/>
    </source>
</evidence>
<reference key="1">
    <citation type="submission" date="2005-03" db="EMBL/GenBank/DDBJ databases">
        <title>Comparison of the complete genome sequences of Rhodococcus erythropolis PR4 and Rhodococcus opacus B4.</title>
        <authorList>
            <person name="Takarada H."/>
            <person name="Sekine M."/>
            <person name="Hosoyama A."/>
            <person name="Yamada R."/>
            <person name="Fujisawa T."/>
            <person name="Omata S."/>
            <person name="Shimizu A."/>
            <person name="Tsukatani N."/>
            <person name="Tanikawa S."/>
            <person name="Fujita N."/>
            <person name="Harayama S."/>
        </authorList>
    </citation>
    <scope>NUCLEOTIDE SEQUENCE [LARGE SCALE GENOMIC DNA]</scope>
    <source>
        <strain>PR4 / NBRC 100887</strain>
    </source>
</reference>
<proteinExistence type="inferred from homology"/>
<organism>
    <name type="scientific">Rhodococcus erythropolis (strain PR4 / NBRC 100887)</name>
    <dbReference type="NCBI Taxonomy" id="234621"/>
    <lineage>
        <taxon>Bacteria</taxon>
        <taxon>Bacillati</taxon>
        <taxon>Actinomycetota</taxon>
        <taxon>Actinomycetes</taxon>
        <taxon>Mycobacteriales</taxon>
        <taxon>Nocardiaceae</taxon>
        <taxon>Rhodococcus</taxon>
        <taxon>Rhodococcus erythropolis group</taxon>
    </lineage>
</organism>
<name>RBFA_RHOE4</name>
<accession>C0ZYA7</accession>
<feature type="chain" id="PRO_1000201649" description="Ribosome-binding factor A">
    <location>
        <begin position="1"/>
        <end position="159"/>
    </location>
</feature>
<feature type="region of interest" description="Disordered" evidence="2">
    <location>
        <begin position="118"/>
        <end position="159"/>
    </location>
</feature>
<feature type="compositionally biased region" description="Basic and acidic residues" evidence="2">
    <location>
        <begin position="118"/>
        <end position="128"/>
    </location>
</feature>
<feature type="compositionally biased region" description="Basic and acidic residues" evidence="2">
    <location>
        <begin position="137"/>
        <end position="146"/>
    </location>
</feature>
<dbReference type="EMBL" id="AP008957">
    <property type="protein sequence ID" value="BAH33342.1"/>
    <property type="molecule type" value="Genomic_DNA"/>
</dbReference>
<dbReference type="RefSeq" id="WP_003942248.1">
    <property type="nucleotide sequence ID" value="NC_012490.1"/>
</dbReference>
<dbReference type="SMR" id="C0ZYA7"/>
<dbReference type="GeneID" id="64140478"/>
<dbReference type="KEGG" id="rer:RER_26340"/>
<dbReference type="eggNOG" id="COG0858">
    <property type="taxonomic scope" value="Bacteria"/>
</dbReference>
<dbReference type="HOGENOM" id="CLU_089475_0_0_11"/>
<dbReference type="Proteomes" id="UP000002204">
    <property type="component" value="Chromosome"/>
</dbReference>
<dbReference type="GO" id="GO:0005829">
    <property type="term" value="C:cytosol"/>
    <property type="evidence" value="ECO:0007669"/>
    <property type="project" value="TreeGrafter"/>
</dbReference>
<dbReference type="GO" id="GO:0043024">
    <property type="term" value="F:ribosomal small subunit binding"/>
    <property type="evidence" value="ECO:0007669"/>
    <property type="project" value="TreeGrafter"/>
</dbReference>
<dbReference type="GO" id="GO:0030490">
    <property type="term" value="P:maturation of SSU-rRNA"/>
    <property type="evidence" value="ECO:0007669"/>
    <property type="project" value="UniProtKB-UniRule"/>
</dbReference>
<dbReference type="FunFam" id="3.30.300.20:FF:000018">
    <property type="entry name" value="Ribosome-binding factor A"/>
    <property type="match status" value="1"/>
</dbReference>
<dbReference type="Gene3D" id="3.30.300.20">
    <property type="match status" value="1"/>
</dbReference>
<dbReference type="HAMAP" id="MF_00003">
    <property type="entry name" value="RbfA"/>
    <property type="match status" value="1"/>
</dbReference>
<dbReference type="InterPro" id="IPR015946">
    <property type="entry name" value="KH_dom-like_a/b"/>
</dbReference>
<dbReference type="InterPro" id="IPR000238">
    <property type="entry name" value="RbfA"/>
</dbReference>
<dbReference type="InterPro" id="IPR023799">
    <property type="entry name" value="RbfA_dom_sf"/>
</dbReference>
<dbReference type="InterPro" id="IPR020053">
    <property type="entry name" value="Ribosome-bd_factorA_CS"/>
</dbReference>
<dbReference type="NCBIfam" id="TIGR00082">
    <property type="entry name" value="rbfA"/>
    <property type="match status" value="1"/>
</dbReference>
<dbReference type="PANTHER" id="PTHR33515">
    <property type="entry name" value="RIBOSOME-BINDING FACTOR A, CHLOROPLASTIC-RELATED"/>
    <property type="match status" value="1"/>
</dbReference>
<dbReference type="PANTHER" id="PTHR33515:SF1">
    <property type="entry name" value="RIBOSOME-BINDING FACTOR A, CHLOROPLASTIC-RELATED"/>
    <property type="match status" value="1"/>
</dbReference>
<dbReference type="Pfam" id="PF02033">
    <property type="entry name" value="RBFA"/>
    <property type="match status" value="1"/>
</dbReference>
<dbReference type="SUPFAM" id="SSF89919">
    <property type="entry name" value="Ribosome-binding factor A, RbfA"/>
    <property type="match status" value="1"/>
</dbReference>
<dbReference type="PROSITE" id="PS01319">
    <property type="entry name" value="RBFA"/>
    <property type="match status" value="1"/>
</dbReference>